<evidence type="ECO:0000305" key="1"/>
<keyword id="KW-0496">Mitochondrion</keyword>
<keyword id="KW-0687">Ribonucleoprotein</keyword>
<keyword id="KW-0689">Ribosomal protein</keyword>
<feature type="chain" id="PRO_0000134339" description="Small ribosomal subunit protein uS2m">
    <location>
        <begin position="1"/>
        <end position="237"/>
    </location>
</feature>
<comment type="subcellular location">
    <subcellularLocation>
        <location>Mitochondrion</location>
    </subcellularLocation>
</comment>
<comment type="similarity">
    <text evidence="1">Belongs to the universal ribosomal protein uS2 family.</text>
</comment>
<dbReference type="EMBL" id="M68929">
    <property type="protein sequence ID" value="AAC09461.1"/>
    <property type="molecule type" value="Genomic_DNA"/>
</dbReference>
<dbReference type="PIR" id="S26007">
    <property type="entry name" value="S26007"/>
</dbReference>
<dbReference type="RefSeq" id="NP_054464.1">
    <property type="nucleotide sequence ID" value="NC_001660.1"/>
</dbReference>
<dbReference type="SMR" id="P26864"/>
<dbReference type="GeneID" id="2702629"/>
<dbReference type="GO" id="GO:0005739">
    <property type="term" value="C:mitochondrion"/>
    <property type="evidence" value="ECO:0007669"/>
    <property type="project" value="UniProtKB-SubCell"/>
</dbReference>
<dbReference type="GO" id="GO:0015935">
    <property type="term" value="C:small ribosomal subunit"/>
    <property type="evidence" value="ECO:0007669"/>
    <property type="project" value="InterPro"/>
</dbReference>
<dbReference type="GO" id="GO:0003735">
    <property type="term" value="F:structural constituent of ribosome"/>
    <property type="evidence" value="ECO:0007669"/>
    <property type="project" value="InterPro"/>
</dbReference>
<dbReference type="GO" id="GO:0006412">
    <property type="term" value="P:translation"/>
    <property type="evidence" value="ECO:0007669"/>
    <property type="project" value="InterPro"/>
</dbReference>
<dbReference type="CDD" id="cd01425">
    <property type="entry name" value="RPS2"/>
    <property type="match status" value="1"/>
</dbReference>
<dbReference type="Gene3D" id="3.40.50.10490">
    <property type="entry name" value="Glucose-6-phosphate isomerase like protein, domain 1"/>
    <property type="match status" value="1"/>
</dbReference>
<dbReference type="HAMAP" id="MF_00291_B">
    <property type="entry name" value="Ribosomal_uS2_B"/>
    <property type="match status" value="1"/>
</dbReference>
<dbReference type="InterPro" id="IPR001865">
    <property type="entry name" value="Ribosomal_uS2"/>
</dbReference>
<dbReference type="InterPro" id="IPR005706">
    <property type="entry name" value="Ribosomal_uS2_bac/mit/plastid"/>
</dbReference>
<dbReference type="InterPro" id="IPR018130">
    <property type="entry name" value="Ribosomal_uS2_CS"/>
</dbReference>
<dbReference type="InterPro" id="IPR023591">
    <property type="entry name" value="Ribosomal_uS2_flav_dom_sf"/>
</dbReference>
<dbReference type="NCBIfam" id="TIGR01011">
    <property type="entry name" value="rpsB_bact"/>
    <property type="match status" value="1"/>
</dbReference>
<dbReference type="PANTHER" id="PTHR12534">
    <property type="entry name" value="30S RIBOSOMAL PROTEIN S2 PROKARYOTIC AND ORGANELLAR"/>
    <property type="match status" value="1"/>
</dbReference>
<dbReference type="PANTHER" id="PTHR12534:SF1">
    <property type="entry name" value="SMALL RIBOSOMAL SUBUNIT PROTEIN US2M"/>
    <property type="match status" value="1"/>
</dbReference>
<dbReference type="Pfam" id="PF00318">
    <property type="entry name" value="Ribosomal_S2"/>
    <property type="match status" value="1"/>
</dbReference>
<dbReference type="PRINTS" id="PR00395">
    <property type="entry name" value="RIBOSOMALS2"/>
</dbReference>
<dbReference type="SUPFAM" id="SSF52313">
    <property type="entry name" value="Ribosomal protein S2"/>
    <property type="match status" value="1"/>
</dbReference>
<dbReference type="PROSITE" id="PS00962">
    <property type="entry name" value="RIBOSOMAL_S2_1"/>
    <property type="match status" value="1"/>
</dbReference>
<dbReference type="PROSITE" id="PS00963">
    <property type="entry name" value="RIBOSOMAL_S2_2"/>
    <property type="match status" value="1"/>
</dbReference>
<name>RT02_MARPO</name>
<geneLocation type="mitochondrion"/>
<accession>P26864</accession>
<proteinExistence type="inferred from homology"/>
<sequence length="237" mass="27399">MYNSNLLVIQKLLSTNAYLGHRIPTSDFQGYLYGFRNEMAIIDLEKTLICLRRTCNLIGSIISAKGHLLLVNTNPEYNKIIQQMAKKTNQSYINHKWIGGFLTNWKHMKKVKKHFQDFSAHPNLKDAFTSSPFDYFPRFKKMQKCFEGIMTHNIPDCLVIINANQNSMAILEANQLQIPIVALVDSNIPNRLHKLITYPVPVNDDSIKFVYLFCNLITKTVILSKRSQRPKVKVKRL</sequence>
<gene>
    <name type="primary">RPS2</name>
</gene>
<protein>
    <recommendedName>
        <fullName evidence="1">Small ribosomal subunit protein uS2m</fullName>
    </recommendedName>
    <alternativeName>
        <fullName>Ribosomal protein S2, mitochondrial</fullName>
    </alternativeName>
</protein>
<organism>
    <name type="scientific">Marchantia polymorpha</name>
    <name type="common">Common liverwort</name>
    <name type="synonym">Marchantia aquatica</name>
    <dbReference type="NCBI Taxonomy" id="3197"/>
    <lineage>
        <taxon>Eukaryota</taxon>
        <taxon>Viridiplantae</taxon>
        <taxon>Streptophyta</taxon>
        <taxon>Embryophyta</taxon>
        <taxon>Marchantiophyta</taxon>
        <taxon>Marchantiopsida</taxon>
        <taxon>Marchantiidae</taxon>
        <taxon>Marchantiales</taxon>
        <taxon>Marchantiaceae</taxon>
        <taxon>Marchantia</taxon>
    </lineage>
</organism>
<reference key="1">
    <citation type="journal article" date="1992" name="J. Mol. Biol.">
        <title>Gene organization deduced from the complete sequence of liverwort Marchantia polymorpha mitochondrial DNA. A primitive form of plant mitochondrial genome.</title>
        <authorList>
            <person name="Oda K."/>
            <person name="Yamato K."/>
            <person name="Ohta E."/>
            <person name="Nakamura Y."/>
            <person name="Takemura M."/>
            <person name="Nozato N."/>
            <person name="Akashi K."/>
            <person name="Kanegae T."/>
            <person name="Ogura Y."/>
            <person name="Kohchi T."/>
            <person name="Ohyama K."/>
        </authorList>
    </citation>
    <scope>NUCLEOTIDE SEQUENCE [GENOMIC DNA]</scope>
</reference>
<reference key="2">
    <citation type="journal article" date="1992" name="Nucleic Acids Res.">
        <title>Gene clusters for ribosomal proteins in the mitochondrial genome of a liverwort, Marchantia polymorpha.</title>
        <authorList>
            <person name="Takemura M."/>
            <person name="Oda K."/>
            <person name="Yamato K."/>
            <person name="Ohta E."/>
            <person name="Nakamura Y."/>
            <person name="Nozato N."/>
            <person name="Akashi K."/>
            <person name="Ohyama K."/>
        </authorList>
    </citation>
    <scope>NUCLEOTIDE SEQUENCE [GENOMIC DNA]</scope>
</reference>